<feature type="signal peptide" evidence="1">
    <location>
        <begin position="1"/>
        <end position="16"/>
    </location>
</feature>
<feature type="chain" id="PRO_0000418573" description="Basic phospholipase A2 Sct-N6">
    <location>
        <begin position="17"/>
        <end position="138"/>
    </location>
</feature>
<feature type="active site" evidence="2">
    <location>
        <position position="63"/>
    </location>
</feature>
<feature type="active site" evidence="2">
    <location>
        <position position="105"/>
    </location>
</feature>
<feature type="binding site" evidence="2">
    <location>
        <position position="43"/>
    </location>
    <ligand>
        <name>Ca(2+)</name>
        <dbReference type="ChEBI" id="CHEBI:29108"/>
    </ligand>
</feature>
<feature type="binding site" evidence="2">
    <location>
        <position position="45"/>
    </location>
    <ligand>
        <name>Ca(2+)</name>
        <dbReference type="ChEBI" id="CHEBI:29108"/>
    </ligand>
</feature>
<feature type="binding site" evidence="2">
    <location>
        <position position="47"/>
    </location>
    <ligand>
        <name>Ca(2+)</name>
        <dbReference type="ChEBI" id="CHEBI:29108"/>
    </ligand>
</feature>
<feature type="binding site" evidence="2">
    <location>
        <position position="64"/>
    </location>
    <ligand>
        <name>Ca(2+)</name>
        <dbReference type="ChEBI" id="CHEBI:29108"/>
    </ligand>
</feature>
<feature type="disulfide bond" evidence="2">
    <location>
        <begin position="42"/>
        <end position="131"/>
    </location>
</feature>
<feature type="disulfide bond" evidence="2">
    <location>
        <begin position="44"/>
        <end position="60"/>
    </location>
</feature>
<feature type="disulfide bond" evidence="2">
    <location>
        <begin position="59"/>
        <end position="111"/>
    </location>
</feature>
<feature type="disulfide bond" evidence="2">
    <location>
        <begin position="65"/>
        <end position="138"/>
    </location>
</feature>
<feature type="disulfide bond" evidence="2">
    <location>
        <begin position="66"/>
        <end position="104"/>
    </location>
</feature>
<feature type="disulfide bond" evidence="2">
    <location>
        <begin position="73"/>
        <end position="97"/>
    </location>
</feature>
<feature type="disulfide bond" evidence="2">
    <location>
        <begin position="91"/>
        <end position="102"/>
    </location>
</feature>
<dbReference type="EC" id="3.1.1.4"/>
<dbReference type="EMBL" id="AY355169">
    <property type="protein sequence ID" value="AAR14163.1"/>
    <property type="molecule type" value="mRNA"/>
</dbReference>
<dbReference type="SMR" id="Q6EER3"/>
<dbReference type="GO" id="GO:0005576">
    <property type="term" value="C:extracellular region"/>
    <property type="evidence" value="ECO:0007669"/>
    <property type="project" value="UniProtKB-SubCell"/>
</dbReference>
<dbReference type="GO" id="GO:0005509">
    <property type="term" value="F:calcium ion binding"/>
    <property type="evidence" value="ECO:0007669"/>
    <property type="project" value="InterPro"/>
</dbReference>
<dbReference type="GO" id="GO:0047498">
    <property type="term" value="F:calcium-dependent phospholipase A2 activity"/>
    <property type="evidence" value="ECO:0007669"/>
    <property type="project" value="TreeGrafter"/>
</dbReference>
<dbReference type="GO" id="GO:0005543">
    <property type="term" value="F:phospholipid binding"/>
    <property type="evidence" value="ECO:0007669"/>
    <property type="project" value="TreeGrafter"/>
</dbReference>
<dbReference type="GO" id="GO:0090729">
    <property type="term" value="F:toxin activity"/>
    <property type="evidence" value="ECO:0007669"/>
    <property type="project" value="UniProtKB-KW"/>
</dbReference>
<dbReference type="GO" id="GO:0050482">
    <property type="term" value="P:arachidonate secretion"/>
    <property type="evidence" value="ECO:0007669"/>
    <property type="project" value="InterPro"/>
</dbReference>
<dbReference type="GO" id="GO:0016042">
    <property type="term" value="P:lipid catabolic process"/>
    <property type="evidence" value="ECO:0007669"/>
    <property type="project" value="UniProtKB-KW"/>
</dbReference>
<dbReference type="GO" id="GO:0042130">
    <property type="term" value="P:negative regulation of T cell proliferation"/>
    <property type="evidence" value="ECO:0007669"/>
    <property type="project" value="TreeGrafter"/>
</dbReference>
<dbReference type="GO" id="GO:0006644">
    <property type="term" value="P:phospholipid metabolic process"/>
    <property type="evidence" value="ECO:0007669"/>
    <property type="project" value="InterPro"/>
</dbReference>
<dbReference type="CDD" id="cd00125">
    <property type="entry name" value="PLA2c"/>
    <property type="match status" value="1"/>
</dbReference>
<dbReference type="FunFam" id="1.20.90.10:FF:000001">
    <property type="entry name" value="Basic phospholipase A2 homolog"/>
    <property type="match status" value="1"/>
</dbReference>
<dbReference type="Gene3D" id="1.20.90.10">
    <property type="entry name" value="Phospholipase A2 domain"/>
    <property type="match status" value="1"/>
</dbReference>
<dbReference type="InterPro" id="IPR001211">
    <property type="entry name" value="PLipase_A2"/>
</dbReference>
<dbReference type="InterPro" id="IPR033112">
    <property type="entry name" value="PLipase_A2_Asp_AS"/>
</dbReference>
<dbReference type="InterPro" id="IPR016090">
    <property type="entry name" value="PLipase_A2_dom"/>
</dbReference>
<dbReference type="InterPro" id="IPR036444">
    <property type="entry name" value="PLipase_A2_dom_sf"/>
</dbReference>
<dbReference type="InterPro" id="IPR033113">
    <property type="entry name" value="PLipase_A2_His_AS"/>
</dbReference>
<dbReference type="PANTHER" id="PTHR11716">
    <property type="entry name" value="PHOSPHOLIPASE A2 FAMILY MEMBER"/>
    <property type="match status" value="1"/>
</dbReference>
<dbReference type="PANTHER" id="PTHR11716:SF9">
    <property type="entry name" value="PHOSPHOLIPASE A2, MEMBRANE ASSOCIATED"/>
    <property type="match status" value="1"/>
</dbReference>
<dbReference type="Pfam" id="PF00068">
    <property type="entry name" value="Phospholip_A2_1"/>
    <property type="match status" value="1"/>
</dbReference>
<dbReference type="PRINTS" id="PR00389">
    <property type="entry name" value="PHPHLIPASEA2"/>
</dbReference>
<dbReference type="SMART" id="SM00085">
    <property type="entry name" value="PA2c"/>
    <property type="match status" value="1"/>
</dbReference>
<dbReference type="SUPFAM" id="SSF48619">
    <property type="entry name" value="Phospholipase A2, PLA2"/>
    <property type="match status" value="1"/>
</dbReference>
<dbReference type="PROSITE" id="PS00119">
    <property type="entry name" value="PA2_ASP"/>
    <property type="match status" value="1"/>
</dbReference>
<dbReference type="PROSITE" id="PS00118">
    <property type="entry name" value="PA2_HIS"/>
    <property type="match status" value="1"/>
</dbReference>
<accession>Q6EER3</accession>
<organism>
    <name type="scientific">Sistrurus tergeminus</name>
    <name type="common">Western massasauga</name>
    <name type="synonym">Sistrurus catenatus tergeminus</name>
    <dbReference type="NCBI Taxonomy" id="8757"/>
    <lineage>
        <taxon>Eukaryota</taxon>
        <taxon>Metazoa</taxon>
        <taxon>Chordata</taxon>
        <taxon>Craniata</taxon>
        <taxon>Vertebrata</taxon>
        <taxon>Euteleostomi</taxon>
        <taxon>Lepidosauria</taxon>
        <taxon>Squamata</taxon>
        <taxon>Bifurcata</taxon>
        <taxon>Unidentata</taxon>
        <taxon>Episquamata</taxon>
        <taxon>Toxicofera</taxon>
        <taxon>Serpentes</taxon>
        <taxon>Colubroidea</taxon>
        <taxon>Viperidae</taxon>
        <taxon>Crotalinae</taxon>
        <taxon>Sistrurus</taxon>
    </lineage>
</organism>
<reference key="1">
    <citation type="journal article" date="2004" name="Biochem. J.">
        <title>Molecular evolution and structure-function relationships of crotoxin-like and asparagine-6-containing phospholipases A2 in pit viper venoms.</title>
        <authorList>
            <person name="Chen Y.-H."/>
            <person name="Wang Y.-M."/>
            <person name="Hseu M.-J."/>
            <person name="Tsai I.-H."/>
        </authorList>
    </citation>
    <scope>NUCLEOTIDE SEQUENCE [MRNA]</scope>
    <source>
        <tissue>Venom gland</tissue>
    </source>
</reference>
<protein>
    <recommendedName>
        <fullName evidence="5">Basic phospholipase A2 Sct-N6</fullName>
        <shortName>svPLA2</shortName>
        <ecNumber>3.1.1.4</ecNumber>
    </recommendedName>
    <alternativeName>
        <fullName>Phosphatidylcholine 2-acylhydrolase</fullName>
    </alternativeName>
</protein>
<proteinExistence type="evidence at transcript level"/>
<evidence type="ECO:0000250" key="1"/>
<evidence type="ECO:0000250" key="2">
    <source>
        <dbReference type="UniProtKB" id="O42187"/>
    </source>
</evidence>
<evidence type="ECO:0000255" key="3">
    <source>
        <dbReference type="PROSITE-ProRule" id="PRU10035"/>
    </source>
</evidence>
<evidence type="ECO:0000255" key="4">
    <source>
        <dbReference type="PROSITE-ProRule" id="PRU10036"/>
    </source>
</evidence>
<evidence type="ECO:0000303" key="5">
    <source>
    </source>
</evidence>
<evidence type="ECO:0000305" key="6"/>
<evidence type="ECO:0000305" key="7">
    <source>
    </source>
</evidence>
<name>PA2B2_SISTE</name>
<sequence>MRTFWIVAVLLVGVEGNLLQFNKMIKIMTKKNAIPSYSSYGCYCGWGGRGRPKDATDRCCFVHDCCYEKLTDCSPKTDTYSYSLKSGVIICGGNDPCKKQICECDKAAAVCFGENLSTYKKRYMFYPDFLCTDPSETC</sequence>
<keyword id="KW-0106">Calcium</keyword>
<keyword id="KW-1015">Disulfide bond</keyword>
<keyword id="KW-0378">Hydrolase</keyword>
<keyword id="KW-0442">Lipid degradation</keyword>
<keyword id="KW-0443">Lipid metabolism</keyword>
<keyword id="KW-0479">Metal-binding</keyword>
<keyword id="KW-0959">Myotoxin</keyword>
<keyword id="KW-0528">Neurotoxin</keyword>
<keyword id="KW-0638">Presynaptic neurotoxin</keyword>
<keyword id="KW-0964">Secreted</keyword>
<keyword id="KW-0732">Signal</keyword>
<keyword id="KW-0800">Toxin</keyword>
<comment type="function">
    <text evidence="1">Snake venom phospholipase A2 (PLA2) that displays edema-inducing activities, as well as presynaptic neurotoxicity and low myotoxicity. PLA2 catalyzes the calcium-dependent hydrolysis of the 2-acyl groups in 3-sn-phosphoglycerides (By similarity).</text>
</comment>
<comment type="catalytic activity">
    <reaction evidence="3 4">
        <text>a 1,2-diacyl-sn-glycero-3-phosphocholine + H2O = a 1-acyl-sn-glycero-3-phosphocholine + a fatty acid + H(+)</text>
        <dbReference type="Rhea" id="RHEA:15801"/>
        <dbReference type="ChEBI" id="CHEBI:15377"/>
        <dbReference type="ChEBI" id="CHEBI:15378"/>
        <dbReference type="ChEBI" id="CHEBI:28868"/>
        <dbReference type="ChEBI" id="CHEBI:57643"/>
        <dbReference type="ChEBI" id="CHEBI:58168"/>
        <dbReference type="EC" id="3.1.1.4"/>
    </reaction>
</comment>
<comment type="cofactor">
    <cofactor evidence="1">
        <name>Ca(2+)</name>
        <dbReference type="ChEBI" id="CHEBI:29108"/>
    </cofactor>
    <text evidence="1">Binds 1 Ca(2+) ion.</text>
</comment>
<comment type="subcellular location">
    <subcellularLocation>
        <location evidence="7">Secreted</location>
    </subcellularLocation>
</comment>
<comment type="tissue specificity">
    <text evidence="7">Expressed by the venom gland.</text>
</comment>
<comment type="similarity">
    <text evidence="6">Belongs to the phospholipase A2 family. Group II subfamily. D49 sub-subfamily.</text>
</comment>